<gene>
    <name type="primary">FGA</name>
</gene>
<reference key="1">
    <citation type="journal article" date="1965" name="Acta Chem. Scand.">
        <title>Studies on fibrinopeptides from mammals.</title>
        <authorList>
            <person name="Blombaeck B."/>
            <person name="Blombaeck M."/>
            <person name="Grondahl N.J."/>
        </authorList>
    </citation>
    <scope>PROTEIN SEQUENCE</scope>
</reference>
<organism>
    <name type="scientific">Bison bonasus</name>
    <name type="common">European bison</name>
    <dbReference type="NCBI Taxonomy" id="9902"/>
    <lineage>
        <taxon>Eukaryota</taxon>
        <taxon>Metazoa</taxon>
        <taxon>Chordata</taxon>
        <taxon>Craniata</taxon>
        <taxon>Vertebrata</taxon>
        <taxon>Euteleostomi</taxon>
        <taxon>Mammalia</taxon>
        <taxon>Eutheria</taxon>
        <taxon>Laurasiatheria</taxon>
        <taxon>Artiodactyla</taxon>
        <taxon>Ruminantia</taxon>
        <taxon>Pecora</taxon>
        <taxon>Bovidae</taxon>
        <taxon>Bovinae</taxon>
        <taxon>Bison</taxon>
    </lineage>
</organism>
<feature type="peptide" id="PRO_0000009004" description="Fibrinopeptide A">
    <location>
        <begin position="1"/>
        <end position="19"/>
    </location>
</feature>
<feature type="non-terminal residue">
    <location>
        <position position="19"/>
    </location>
</feature>
<name>FIBA_BISBO</name>
<accession>P14441</accession>
<evidence type="ECO:0000250" key="1">
    <source>
        <dbReference type="UniProtKB" id="E9PV24"/>
    </source>
</evidence>
<evidence type="ECO:0000250" key="2">
    <source>
        <dbReference type="UniProtKB" id="P02671"/>
    </source>
</evidence>
<dbReference type="GO" id="GO:0005576">
    <property type="term" value="C:extracellular region"/>
    <property type="evidence" value="ECO:0007669"/>
    <property type="project" value="UniProtKB-SubCell"/>
</dbReference>
<dbReference type="GO" id="GO:0002250">
    <property type="term" value="P:adaptive immune response"/>
    <property type="evidence" value="ECO:0007669"/>
    <property type="project" value="UniProtKB-KW"/>
</dbReference>
<dbReference type="GO" id="GO:0007596">
    <property type="term" value="P:blood coagulation"/>
    <property type="evidence" value="ECO:0007669"/>
    <property type="project" value="UniProtKB-KW"/>
</dbReference>
<dbReference type="GO" id="GO:0045087">
    <property type="term" value="P:innate immune response"/>
    <property type="evidence" value="ECO:0007669"/>
    <property type="project" value="UniProtKB-KW"/>
</dbReference>
<keyword id="KW-1064">Adaptive immunity</keyword>
<keyword id="KW-0094">Blood coagulation</keyword>
<keyword id="KW-0175">Coiled coil</keyword>
<keyword id="KW-0903">Direct protein sequencing</keyword>
<keyword id="KW-1015">Disulfide bond</keyword>
<keyword id="KW-0356">Hemostasis</keyword>
<keyword id="KW-0391">Immunity</keyword>
<keyword id="KW-0399">Innate immunity</keyword>
<keyword id="KW-0964">Secreted</keyword>
<sequence length="19" mass="1836">EDGSDPASGDFLAEGGGVR</sequence>
<proteinExistence type="evidence at protein level"/>
<protein>
    <recommendedName>
        <fullName>Fibrinogen alpha chain</fullName>
    </recommendedName>
    <component>
        <recommendedName>
            <fullName>Fibrinopeptide A</fullName>
        </recommendedName>
    </component>
</protein>
<comment type="function">
    <text evidence="1">Cleaved by the protease thrombin to yield monomers which, together with fibrinogen beta (FGB) and fibrinogen gamma (FGG), polymerize to form an insoluble fibrin matrix. Fibrin has a major function in hemostasis as one of the primary components of blood clots. In addition, functions during the early stages of wound repair to stabilize the lesion and guide cell migration during re-epithelialization. Was originally thought to be essential for platelet aggregation, based on in vitro studies using anticoagulated blood. However, subsequent studies have shown that it is not absolutely required for thrombus formation in vivo. Enhances expression of SELP in activated platelets via an ITGB3-dependent pathway. Maternal fibrinogen is essential for successful pregnancy. Fibrin deposition is also associated with infection, where it protects against IFNG-mediated hemorrhage. May also facilitate the immune response via both innate and T-cell mediated pathways.</text>
</comment>
<comment type="subunit">
    <text evidence="2">Heterohexamer; disulfide linked. Contains 2 sets of 3 non-identical chains (alpha, beta and gamma). The 2 heterotrimers are in head to head conformation with the N-termini in a small central domain (By similarity).</text>
</comment>
<comment type="subcellular location">
    <subcellularLocation>
        <location>Secreted</location>
    </subcellularLocation>
</comment>
<comment type="domain">
    <text evidence="2">A long coiled coil structure formed by 3 polypeptide chains connects the central nodule to the C-terminal domains (distal nodules). The long C-terminal ends of the alpha chains fold back, contributing a fourth strand to the coiled coil structure.</text>
</comment>
<comment type="PTM">
    <text>Conversion of fibrinogen to fibrin is triggered by thrombin, which cleaves fibrinopeptides A and B from alpha and beta chains, and thus exposes the N-terminal polymerization sites responsible for the formation of the soft clot. The soft clot is converted into the hard clot by factor XIIIA which catalyzes the epsilon-(gamma-glutamyl)lysine cross-linking between gamma chains (stronger) and between alpha chains (weaker) of different monomers.</text>
</comment>
<comment type="PTM">
    <text>Forms F13A-mediated cross-links between a glutamine and the epsilon-amino group of a lysine residue, forming fibronectin-fibrinogen heteropolymers.</text>
</comment>